<feature type="chain" id="PRO_0000336395" description="Thiamine-phosphate synthase">
    <location>
        <begin position="1"/>
        <end position="212"/>
    </location>
</feature>
<feature type="binding site" evidence="1">
    <location>
        <begin position="33"/>
        <end position="37"/>
    </location>
    <ligand>
        <name>4-amino-2-methyl-5-(diphosphooxymethyl)pyrimidine</name>
        <dbReference type="ChEBI" id="CHEBI:57841"/>
    </ligand>
</feature>
<feature type="binding site" evidence="1">
    <location>
        <position position="65"/>
    </location>
    <ligand>
        <name>4-amino-2-methyl-5-(diphosphooxymethyl)pyrimidine</name>
        <dbReference type="ChEBI" id="CHEBI:57841"/>
    </ligand>
</feature>
<feature type="binding site" evidence="1">
    <location>
        <position position="66"/>
    </location>
    <ligand>
        <name>Mg(2+)</name>
        <dbReference type="ChEBI" id="CHEBI:18420"/>
    </ligand>
</feature>
<feature type="binding site" evidence="1">
    <location>
        <position position="85"/>
    </location>
    <ligand>
        <name>Mg(2+)</name>
        <dbReference type="ChEBI" id="CHEBI:18420"/>
    </ligand>
</feature>
<feature type="binding site" evidence="1">
    <location>
        <position position="104"/>
    </location>
    <ligand>
        <name>4-amino-2-methyl-5-(diphosphooxymethyl)pyrimidine</name>
        <dbReference type="ChEBI" id="CHEBI:57841"/>
    </ligand>
</feature>
<feature type="binding site" evidence="1">
    <location>
        <begin position="130"/>
        <end position="132"/>
    </location>
    <ligand>
        <name>2-[(2R,5Z)-2-carboxy-4-methylthiazol-5(2H)-ylidene]ethyl phosphate</name>
        <dbReference type="ChEBI" id="CHEBI:62899"/>
    </ligand>
</feature>
<feature type="binding site" evidence="1">
    <location>
        <position position="133"/>
    </location>
    <ligand>
        <name>4-amino-2-methyl-5-(diphosphooxymethyl)pyrimidine</name>
        <dbReference type="ChEBI" id="CHEBI:57841"/>
    </ligand>
</feature>
<feature type="binding site" evidence="1">
    <location>
        <position position="166"/>
    </location>
    <ligand>
        <name>2-[(2R,5Z)-2-carboxy-4-methylthiazol-5(2H)-ylidene]ethyl phosphate</name>
        <dbReference type="ChEBI" id="CHEBI:62899"/>
    </ligand>
</feature>
<comment type="function">
    <text evidence="1">Condenses 4-methyl-5-(beta-hydroxyethyl)thiazole monophosphate (THZ-P) and 2-methyl-4-amino-5-hydroxymethyl pyrimidine pyrophosphate (HMP-PP) to form thiamine monophosphate (TMP).</text>
</comment>
<comment type="catalytic activity">
    <reaction evidence="1">
        <text>2-[(2R,5Z)-2-carboxy-4-methylthiazol-5(2H)-ylidene]ethyl phosphate + 4-amino-2-methyl-5-(diphosphooxymethyl)pyrimidine + 2 H(+) = thiamine phosphate + CO2 + diphosphate</text>
        <dbReference type="Rhea" id="RHEA:47844"/>
        <dbReference type="ChEBI" id="CHEBI:15378"/>
        <dbReference type="ChEBI" id="CHEBI:16526"/>
        <dbReference type="ChEBI" id="CHEBI:33019"/>
        <dbReference type="ChEBI" id="CHEBI:37575"/>
        <dbReference type="ChEBI" id="CHEBI:57841"/>
        <dbReference type="ChEBI" id="CHEBI:62899"/>
        <dbReference type="EC" id="2.5.1.3"/>
    </reaction>
</comment>
<comment type="catalytic activity">
    <reaction evidence="1">
        <text>2-(2-carboxy-4-methylthiazol-5-yl)ethyl phosphate + 4-amino-2-methyl-5-(diphosphooxymethyl)pyrimidine + 2 H(+) = thiamine phosphate + CO2 + diphosphate</text>
        <dbReference type="Rhea" id="RHEA:47848"/>
        <dbReference type="ChEBI" id="CHEBI:15378"/>
        <dbReference type="ChEBI" id="CHEBI:16526"/>
        <dbReference type="ChEBI" id="CHEBI:33019"/>
        <dbReference type="ChEBI" id="CHEBI:37575"/>
        <dbReference type="ChEBI" id="CHEBI:57841"/>
        <dbReference type="ChEBI" id="CHEBI:62890"/>
        <dbReference type="EC" id="2.5.1.3"/>
    </reaction>
</comment>
<comment type="catalytic activity">
    <reaction evidence="1">
        <text>4-methyl-5-(2-phosphooxyethyl)-thiazole + 4-amino-2-methyl-5-(diphosphooxymethyl)pyrimidine + H(+) = thiamine phosphate + diphosphate</text>
        <dbReference type="Rhea" id="RHEA:22328"/>
        <dbReference type="ChEBI" id="CHEBI:15378"/>
        <dbReference type="ChEBI" id="CHEBI:33019"/>
        <dbReference type="ChEBI" id="CHEBI:37575"/>
        <dbReference type="ChEBI" id="CHEBI:57841"/>
        <dbReference type="ChEBI" id="CHEBI:58296"/>
        <dbReference type="EC" id="2.5.1.3"/>
    </reaction>
</comment>
<comment type="cofactor">
    <cofactor evidence="1">
        <name>Mg(2+)</name>
        <dbReference type="ChEBI" id="CHEBI:18420"/>
    </cofactor>
    <text evidence="1">Binds 1 Mg(2+) ion per subunit.</text>
</comment>
<comment type="pathway">
    <text evidence="1">Cofactor biosynthesis; thiamine diphosphate biosynthesis; thiamine phosphate from 4-amino-2-methyl-5-diphosphomethylpyrimidine and 4-methyl-5-(2-phosphoethyl)-thiazole: step 1/1.</text>
</comment>
<comment type="similarity">
    <text evidence="1">Belongs to the thiamine-phosphate synthase family.</text>
</comment>
<proteinExistence type="inferred from homology"/>
<accession>A5FJJ1</accession>
<gene>
    <name evidence="1" type="primary">thiE</name>
    <name type="ordered locus">Fjoh_1600</name>
</gene>
<name>THIE_FLAJ1</name>
<sequence>MYNKLQYISQGNTIEDQVRNIHQALDSGCDWIQMRFKNQTEKDSFILAEEIKLLCEKYLASFIINDNLYLAQQINADGVHLGLSDMKIDEARTILGAEKIIGGTANTFEDIQNHVKNGCNYIGLGPFRFTNTKEKLSPILGLSGYFEILQKMKKNKIEVPVYAIGGITLKDINPLMETGIHGIAVSGIITESDEKKILIQQLNEKLYANVIV</sequence>
<protein>
    <recommendedName>
        <fullName evidence="1">Thiamine-phosphate synthase</fullName>
        <shortName evidence="1">TP synthase</shortName>
        <shortName evidence="1">TPS</shortName>
        <ecNumber evidence="1">2.5.1.3</ecNumber>
    </recommendedName>
    <alternativeName>
        <fullName evidence="1">Thiamine-phosphate pyrophosphorylase</fullName>
        <shortName evidence="1">TMP pyrophosphorylase</shortName>
        <shortName evidence="1">TMP-PPase</shortName>
    </alternativeName>
</protein>
<organism>
    <name type="scientific">Flavobacterium johnsoniae (strain ATCC 17061 / DSM 2064 / JCM 8514 / BCRC 14874 / CCUG 350202 / NBRC 14942 / NCIMB 11054 / UW101)</name>
    <name type="common">Cytophaga johnsonae</name>
    <dbReference type="NCBI Taxonomy" id="376686"/>
    <lineage>
        <taxon>Bacteria</taxon>
        <taxon>Pseudomonadati</taxon>
        <taxon>Bacteroidota</taxon>
        <taxon>Flavobacteriia</taxon>
        <taxon>Flavobacteriales</taxon>
        <taxon>Flavobacteriaceae</taxon>
        <taxon>Flavobacterium</taxon>
    </lineage>
</organism>
<evidence type="ECO:0000255" key="1">
    <source>
        <dbReference type="HAMAP-Rule" id="MF_00097"/>
    </source>
</evidence>
<reference key="1">
    <citation type="journal article" date="2009" name="Appl. Environ. Microbiol.">
        <title>Novel features of the polysaccharide-digesting gliding bacterium Flavobacterium johnsoniae as revealed by genome sequence analysis.</title>
        <authorList>
            <person name="McBride M.J."/>
            <person name="Xie G."/>
            <person name="Martens E.C."/>
            <person name="Lapidus A."/>
            <person name="Henrissat B."/>
            <person name="Rhodes R.G."/>
            <person name="Goltsman E."/>
            <person name="Wang W."/>
            <person name="Xu J."/>
            <person name="Hunnicutt D.W."/>
            <person name="Staroscik A.M."/>
            <person name="Hoover T.R."/>
            <person name="Cheng Y.Q."/>
            <person name="Stein J.L."/>
        </authorList>
    </citation>
    <scope>NUCLEOTIDE SEQUENCE [LARGE SCALE GENOMIC DNA]</scope>
    <source>
        <strain>ATCC 17061 / DSM 2064 / JCM 8514 / BCRC 14874 / CCUG 350202 / NBRC 14942 / NCIMB 11054 / UW101</strain>
    </source>
</reference>
<dbReference type="EC" id="2.5.1.3" evidence="1"/>
<dbReference type="EMBL" id="CP000685">
    <property type="protein sequence ID" value="ABQ04632.1"/>
    <property type="molecule type" value="Genomic_DNA"/>
</dbReference>
<dbReference type="RefSeq" id="WP_012023676.1">
    <property type="nucleotide sequence ID" value="NC_009441.1"/>
</dbReference>
<dbReference type="SMR" id="A5FJJ1"/>
<dbReference type="STRING" id="376686.Fjoh_1600"/>
<dbReference type="KEGG" id="fjo:Fjoh_1600"/>
<dbReference type="eggNOG" id="COG0352">
    <property type="taxonomic scope" value="Bacteria"/>
</dbReference>
<dbReference type="HOGENOM" id="CLU_018272_3_2_10"/>
<dbReference type="OrthoDB" id="9812206at2"/>
<dbReference type="UniPathway" id="UPA00060">
    <property type="reaction ID" value="UER00141"/>
</dbReference>
<dbReference type="Proteomes" id="UP000006694">
    <property type="component" value="Chromosome"/>
</dbReference>
<dbReference type="GO" id="GO:0005737">
    <property type="term" value="C:cytoplasm"/>
    <property type="evidence" value="ECO:0007669"/>
    <property type="project" value="TreeGrafter"/>
</dbReference>
<dbReference type="GO" id="GO:0000287">
    <property type="term" value="F:magnesium ion binding"/>
    <property type="evidence" value="ECO:0007669"/>
    <property type="project" value="UniProtKB-UniRule"/>
</dbReference>
<dbReference type="GO" id="GO:0004789">
    <property type="term" value="F:thiamine-phosphate diphosphorylase activity"/>
    <property type="evidence" value="ECO:0007669"/>
    <property type="project" value="UniProtKB-UniRule"/>
</dbReference>
<dbReference type="GO" id="GO:0009228">
    <property type="term" value="P:thiamine biosynthetic process"/>
    <property type="evidence" value="ECO:0007669"/>
    <property type="project" value="UniProtKB-KW"/>
</dbReference>
<dbReference type="GO" id="GO:0009229">
    <property type="term" value="P:thiamine diphosphate biosynthetic process"/>
    <property type="evidence" value="ECO:0007669"/>
    <property type="project" value="UniProtKB-UniRule"/>
</dbReference>
<dbReference type="CDD" id="cd00564">
    <property type="entry name" value="TMP_TenI"/>
    <property type="match status" value="1"/>
</dbReference>
<dbReference type="Gene3D" id="3.20.20.70">
    <property type="entry name" value="Aldolase class I"/>
    <property type="match status" value="1"/>
</dbReference>
<dbReference type="HAMAP" id="MF_00097">
    <property type="entry name" value="TMP_synthase"/>
    <property type="match status" value="1"/>
</dbReference>
<dbReference type="InterPro" id="IPR013785">
    <property type="entry name" value="Aldolase_TIM"/>
</dbReference>
<dbReference type="InterPro" id="IPR036206">
    <property type="entry name" value="ThiamineP_synth_sf"/>
</dbReference>
<dbReference type="InterPro" id="IPR022998">
    <property type="entry name" value="ThiamineP_synth_TenI"/>
</dbReference>
<dbReference type="InterPro" id="IPR034291">
    <property type="entry name" value="TMP_synthase"/>
</dbReference>
<dbReference type="NCBIfam" id="NF000736">
    <property type="entry name" value="PRK00043.2-3"/>
    <property type="match status" value="1"/>
</dbReference>
<dbReference type="NCBIfam" id="TIGR00693">
    <property type="entry name" value="thiE"/>
    <property type="match status" value="1"/>
</dbReference>
<dbReference type="PANTHER" id="PTHR20857">
    <property type="entry name" value="THIAMINE-PHOSPHATE PYROPHOSPHORYLASE"/>
    <property type="match status" value="1"/>
</dbReference>
<dbReference type="PANTHER" id="PTHR20857:SF15">
    <property type="entry name" value="THIAMINE-PHOSPHATE SYNTHASE"/>
    <property type="match status" value="1"/>
</dbReference>
<dbReference type="Pfam" id="PF02581">
    <property type="entry name" value="TMP-TENI"/>
    <property type="match status" value="1"/>
</dbReference>
<dbReference type="SUPFAM" id="SSF51391">
    <property type="entry name" value="Thiamin phosphate synthase"/>
    <property type="match status" value="1"/>
</dbReference>
<keyword id="KW-0460">Magnesium</keyword>
<keyword id="KW-0479">Metal-binding</keyword>
<keyword id="KW-0784">Thiamine biosynthesis</keyword>
<keyword id="KW-0808">Transferase</keyword>